<organism>
    <name type="scientific">Mus musculus</name>
    <name type="common">Mouse</name>
    <dbReference type="NCBI Taxonomy" id="10090"/>
    <lineage>
        <taxon>Eukaryota</taxon>
        <taxon>Metazoa</taxon>
        <taxon>Chordata</taxon>
        <taxon>Craniata</taxon>
        <taxon>Vertebrata</taxon>
        <taxon>Euteleostomi</taxon>
        <taxon>Mammalia</taxon>
        <taxon>Eutheria</taxon>
        <taxon>Euarchontoglires</taxon>
        <taxon>Glires</taxon>
        <taxon>Rodentia</taxon>
        <taxon>Myomorpha</taxon>
        <taxon>Muroidea</taxon>
        <taxon>Muridae</taxon>
        <taxon>Murinae</taxon>
        <taxon>Mus</taxon>
        <taxon>Mus</taxon>
    </lineage>
</organism>
<protein>
    <recommendedName>
        <fullName>Tumor necrosis factor receptor superfamily member 6</fullName>
    </recommendedName>
    <alternativeName>
        <fullName>Apo-1 antigen</fullName>
    </alternativeName>
    <alternativeName>
        <fullName>Apoptosis-mediating surface antigen FAS</fullName>
    </alternativeName>
    <alternativeName>
        <fullName>FASLG receptor</fullName>
    </alternativeName>
    <cdAntigenName>CD95</cdAntigenName>
</protein>
<comment type="function">
    <text evidence="1">Receptor for TNFSF6/FASLG. The adapter molecule FADD recruits caspase CASP8 to the activated receptor. The resulting death-inducing signaling complex (DISC) performs CASP8 proteolytic activation which initiates the subsequent cascade of caspases (aspartate-specific cysteine proteases) mediating apoptosis. FAS-mediated apoptosis may have a role in the induction of peripheral tolerance, in the antigen-stimulated suicide of mature T-cells, or both (By similarity).</text>
</comment>
<comment type="subunit">
    <text evidence="1 7 10 12">Component of the death-induced signaling complex (DISC) composed of cell surface receptor FAS/CD95, adapter protein FADD and the CASP8 protease; recruitment of CASP8 to the complex is required for processing of CASP8 into the p18 and p10 subunits (By similarity). Interacts directly (via DED domain) with NOL3 (via CARD domain); inhibits death-inducing signaling complex (DISC) assembly by inhibiting the increase in FAS-FADD binding induced by FAS activation (PubMed:15383280). Binds DAXX (PubMed:9215629). Interacts with HIPK3 (PubMed:11034606). Part of a complex containing HIPK3 and FADD (By similarity). Binds RIPK1 and FAIM2. Interacts with BABAM2 and FEM1B. Interacts with CALM (By similarity). In the absence of stimulation, interacts with BIRC2, DDX3X and GSK3B. The interaction with BIRC2 and DDX3X is further enhanced upon receptor stimulation and accompanied by DDX3X and BIRC2 cleavage (By similarity).</text>
</comment>
<comment type="interaction">
    <interactant intactId="EBI-296206">
        <id>P25446</id>
    </interactant>
    <interactant intactId="EBI-851690">
        <id>O89110</id>
        <label>Casp8</label>
    </interactant>
    <organismsDiffer>false</organismsDiffer>
    <experiments>3</experiments>
</comment>
<comment type="interaction">
    <interactant intactId="EBI-296206">
        <id>P25446</id>
    </interactant>
    <interactant intactId="EBI-77304">
        <id>O35613</id>
        <label>Daxx</label>
    </interactant>
    <organismsDiffer>false</organismsDiffer>
    <experiments>2</experiments>
</comment>
<comment type="interaction">
    <interactant intactId="EBI-296206">
        <id>P25446</id>
    </interactant>
    <interactant intactId="EBI-524415">
        <id>Q61160</id>
        <label>Fadd</label>
    </interactant>
    <organismsDiffer>false</organismsDiffer>
    <experiments>3</experiments>
</comment>
<comment type="interaction">
    <interactant intactId="EBI-296206">
        <id>P25446</id>
    </interactant>
    <interactant intactId="EBI-524356">
        <id>Q9ERH7</id>
        <label>Hipk3</label>
    </interactant>
    <organismsDiffer>false</organismsDiffer>
    <experiments>3</experiments>
</comment>
<comment type="interaction">
    <interactant intactId="EBI-296206">
        <id>P25446</id>
    </interactant>
    <interactant intactId="EBI-3895605">
        <id>Q60953</id>
        <label>Pml</label>
    </interactant>
    <organismsDiffer>false</organismsDiffer>
    <experiments>6</experiments>
</comment>
<comment type="interaction">
    <interactant intactId="EBI-296206">
        <id>P25446</id>
    </interactant>
    <interactant intactId="EBI-77321">
        <id>Q9UER7</id>
        <label>DAXX</label>
    </interactant>
    <organismsDiffer>true</organismsDiffer>
    <experiments>4</experiments>
</comment>
<comment type="interaction">
    <interactant intactId="EBI-296206">
        <id>P25446</id>
    </interactant>
    <interactant intactId="EBI-494804">
        <id>Q13158</id>
        <label>FADD</label>
    </interactant>
    <organismsDiffer>true</organismsDiffer>
    <experiments>8</experiments>
</comment>
<comment type="subcellular location">
    <subcellularLocation>
        <location evidence="2">Cell membrane</location>
        <topology evidence="2">Single-pass type I membrane protein</topology>
    </subcellularLocation>
    <subcellularLocation>
        <location evidence="1">Membrane raft</location>
    </subcellularLocation>
</comment>
<comment type="tissue specificity">
    <text evidence="8">Detected in various tissues including thymus, liver, lung, heart, and adult ovary.</text>
</comment>
<comment type="induction">
    <text evidence="11">Expression oscillates in a circadian manner in the liver with peak levels seen at CT12.</text>
</comment>
<comment type="domain">
    <text>Contains a death domain involved in the binding of FADD, and maybe to other cytosolic adapter proteins.</text>
</comment>
<comment type="PTM">
    <text evidence="1">Palmitoylated. Palmitoylation by ZDHHC7 prevents the lysosomal degradation of FAS regulating its expression at the plasma membrane.</text>
</comment>
<comment type="disease">
    <text evidence="9">Defects in Fas are the cause of the lymphoproliferation phenotype (lpr) (PubMed:1372394). Lpr mice show lymphadenopathy and autoantibody production (PubMed:1372394).</text>
</comment>
<feature type="signal peptide" evidence="3">
    <location>
        <begin position="1"/>
        <end position="21"/>
    </location>
</feature>
<feature type="chain" id="PRO_0000034567" description="Tumor necrosis factor receptor superfamily member 6">
    <location>
        <begin position="22"/>
        <end position="327"/>
    </location>
</feature>
<feature type="topological domain" description="Extracellular" evidence="3">
    <location>
        <begin position="22"/>
        <end position="169"/>
    </location>
</feature>
<feature type="transmembrane region" description="Helical" evidence="3">
    <location>
        <begin position="170"/>
        <end position="186"/>
    </location>
</feature>
<feature type="topological domain" description="Cytoplasmic" evidence="3">
    <location>
        <begin position="187"/>
        <end position="327"/>
    </location>
</feature>
<feature type="repeat" description="TNFR-Cys 1">
    <location>
        <begin position="43"/>
        <end position="79"/>
    </location>
</feature>
<feature type="repeat" description="TNFR-Cys 2">
    <location>
        <begin position="80"/>
        <end position="123"/>
    </location>
</feature>
<feature type="repeat" description="TNFR-Cys 3">
    <location>
        <begin position="124"/>
        <end position="162"/>
    </location>
</feature>
<feature type="domain" description="Death" evidence="4">
    <location>
        <begin position="222"/>
        <end position="306"/>
    </location>
</feature>
<feature type="region of interest" description="Interaction with HIPK3" evidence="7">
    <location>
        <begin position="204"/>
        <end position="309"/>
    </location>
</feature>
<feature type="region of interest" description="Interaction with CALM" evidence="1">
    <location>
        <begin position="222"/>
        <end position="246"/>
    </location>
</feature>
<feature type="region of interest" description="Disordered" evidence="6">
    <location>
        <begin position="308"/>
        <end position="327"/>
    </location>
</feature>
<feature type="compositionally biased region" description="Polar residues" evidence="6">
    <location>
        <begin position="314"/>
        <end position="327"/>
    </location>
</feature>
<feature type="modified residue" description="Phosphothreonine" evidence="15">
    <location>
        <position position="206"/>
    </location>
</feature>
<feature type="modified residue" description="Phosphoserine" evidence="15">
    <location>
        <position position="217"/>
    </location>
</feature>
<feature type="modified residue" description="Phosphoserine" evidence="14 15">
    <location>
        <position position="220"/>
    </location>
</feature>
<feature type="modified residue" description="Phosphothreonine" evidence="14 15">
    <location>
        <position position="314"/>
    </location>
</feature>
<feature type="lipid moiety-binding region" description="S-palmitoyl cysteine" evidence="1">
    <location>
        <position position="194"/>
    </location>
</feature>
<feature type="glycosylation site" description="N-linked (GlcNAc...) asparagine" evidence="3">
    <location>
        <position position="43"/>
    </location>
</feature>
<feature type="glycosylation site" description="N-linked (GlcNAc...) asparagine" evidence="3">
    <location>
        <position position="114"/>
    </location>
</feature>
<feature type="disulfide bond" evidence="5">
    <location>
        <begin position="44"/>
        <end position="55"/>
    </location>
</feature>
<feature type="disulfide bond" evidence="5">
    <location>
        <begin position="56"/>
        <end position="69"/>
    </location>
</feature>
<feature type="disulfide bond" evidence="5">
    <location>
        <begin position="59"/>
        <end position="78"/>
    </location>
</feature>
<feature type="disulfide bond" evidence="5">
    <location>
        <begin position="81"/>
        <end position="97"/>
    </location>
</feature>
<feature type="disulfide bond" evidence="5">
    <location>
        <begin position="100"/>
        <end position="115"/>
    </location>
</feature>
<feature type="disulfide bond" evidence="5">
    <location>
        <begin position="103"/>
        <end position="123"/>
    </location>
</feature>
<feature type="disulfide bond" evidence="5">
    <location>
        <begin position="125"/>
        <end position="139"/>
    </location>
</feature>
<feature type="disulfide bond" evidence="5">
    <location>
        <begin position="142"/>
        <end position="153"/>
    </location>
</feature>
<feature type="disulfide bond" evidence="5">
    <location>
        <begin position="145"/>
        <end position="161"/>
    </location>
</feature>
<feature type="sequence variant" description="In lpr." evidence="9">
    <original>I</original>
    <variation>N</variation>
    <location>
        <position position="246"/>
    </location>
</feature>
<feature type="sequence conflict" description="In Ref. 1; AAA37593, 2; CAC00638 and 7; AAB25700." evidence="13" ref="1 2 7">
    <original>R</original>
    <variation>H</variation>
    <location>
        <position position="38"/>
    </location>
</feature>
<feature type="helix" evidence="16">
    <location>
        <begin position="170"/>
        <end position="179"/>
    </location>
</feature>
<feature type="helix" evidence="16">
    <location>
        <begin position="181"/>
        <end position="189"/>
    </location>
</feature>
<accession>P25446</accession>
<accession>Q6GT31</accession>
<accession>Q9DCQ1</accession>
<dbReference type="EMBL" id="M83649">
    <property type="protein sequence ID" value="AAA37593.1"/>
    <property type="molecule type" value="mRNA"/>
</dbReference>
<dbReference type="EMBL" id="AK002590">
    <property type="protein sequence ID" value="BAB22211.1"/>
    <property type="molecule type" value="mRNA"/>
</dbReference>
<dbReference type="EMBL" id="AJ295702">
    <property type="protein sequence ID" value="CAC00638.1"/>
    <property type="molecule type" value="Genomic_DNA"/>
</dbReference>
<dbReference type="EMBL" id="AJ295703">
    <property type="protein sequence ID" value="CAC00638.1"/>
    <property type="status" value="JOINED"/>
    <property type="molecule type" value="Genomic_DNA"/>
</dbReference>
<dbReference type="EMBL" id="AJ295704">
    <property type="protein sequence ID" value="CAC00638.1"/>
    <property type="status" value="JOINED"/>
    <property type="molecule type" value="Genomic_DNA"/>
</dbReference>
<dbReference type="EMBL" id="DQ846748">
    <property type="protein sequence ID" value="ABI24112.1"/>
    <property type="molecule type" value="mRNA"/>
</dbReference>
<dbReference type="EMBL" id="CH466534">
    <property type="protein sequence ID" value="EDL41748.1"/>
    <property type="molecule type" value="Genomic_DNA"/>
</dbReference>
<dbReference type="EMBL" id="BC061160">
    <property type="protein sequence ID" value="AAH61160.1"/>
    <property type="molecule type" value="mRNA"/>
</dbReference>
<dbReference type="EMBL" id="S56490">
    <property type="protein sequence ID" value="AAB25700.1"/>
    <property type="molecule type" value="Genomic_DNA"/>
</dbReference>
<dbReference type="EMBL" id="S56485">
    <property type="protein sequence ID" value="AAB25700.1"/>
    <property type="status" value="JOINED"/>
    <property type="molecule type" value="Genomic_DNA"/>
</dbReference>
<dbReference type="EMBL" id="S56486">
    <property type="protein sequence ID" value="AAB25700.1"/>
    <property type="status" value="JOINED"/>
    <property type="molecule type" value="Genomic_DNA"/>
</dbReference>
<dbReference type="CCDS" id="CCDS29758.1"/>
<dbReference type="PIR" id="A46484">
    <property type="entry name" value="A46484"/>
</dbReference>
<dbReference type="RefSeq" id="NP_032013.2">
    <property type="nucleotide sequence ID" value="NM_007987.2"/>
</dbReference>
<dbReference type="PDB" id="2NA6">
    <property type="method" value="NMR"/>
    <property type="chains" value="A/B/C=167-193"/>
</dbReference>
<dbReference type="PDB" id="3OQ9">
    <property type="method" value="X-ray"/>
    <property type="resolution" value="6.80 A"/>
    <property type="chains" value="A/B/C/D/E=223-308"/>
</dbReference>
<dbReference type="PDBsum" id="2NA6"/>
<dbReference type="PDBsum" id="3OQ9"/>
<dbReference type="SMR" id="P25446"/>
<dbReference type="BioGRID" id="199594">
    <property type="interactions" value="12"/>
</dbReference>
<dbReference type="DIP" id="DIP-31093N"/>
<dbReference type="FunCoup" id="P25446">
    <property type="interactions" value="1251"/>
</dbReference>
<dbReference type="IntAct" id="P25446">
    <property type="interactions" value="11"/>
</dbReference>
<dbReference type="MINT" id="P25446"/>
<dbReference type="STRING" id="10090.ENSMUSP00000025691"/>
<dbReference type="GlyCosmos" id="P25446">
    <property type="glycosylation" value="2 sites, No reported glycans"/>
</dbReference>
<dbReference type="GlyGen" id="P25446">
    <property type="glycosylation" value="5 sites, 2 N-linked glycans (2 sites), 1 O-linked glycan (2 sites)"/>
</dbReference>
<dbReference type="iPTMnet" id="P25446"/>
<dbReference type="PhosphoSitePlus" id="P25446"/>
<dbReference type="SwissPalm" id="P25446"/>
<dbReference type="jPOST" id="P25446"/>
<dbReference type="PaxDb" id="10090-ENSMUSP00000025691"/>
<dbReference type="PeptideAtlas" id="P25446"/>
<dbReference type="ProteomicsDB" id="258946"/>
<dbReference type="Pumba" id="P25446"/>
<dbReference type="ABCD" id="P25446">
    <property type="antibodies" value="16 sequenced antibodies"/>
</dbReference>
<dbReference type="Antibodypedia" id="4525">
    <property type="antibodies" value="3057 antibodies from 54 providers"/>
</dbReference>
<dbReference type="DNASU" id="14102"/>
<dbReference type="Ensembl" id="ENSMUST00000025691.13">
    <property type="protein sequence ID" value="ENSMUSP00000025691.6"/>
    <property type="gene ID" value="ENSMUSG00000024778.14"/>
</dbReference>
<dbReference type="GeneID" id="14102"/>
<dbReference type="KEGG" id="mmu:14102"/>
<dbReference type="UCSC" id="uc008hgi.2">
    <property type="organism name" value="mouse"/>
</dbReference>
<dbReference type="AGR" id="MGI:95484"/>
<dbReference type="CTD" id="355"/>
<dbReference type="MGI" id="MGI:95484">
    <property type="gene designation" value="Fas"/>
</dbReference>
<dbReference type="VEuPathDB" id="HostDB:ENSMUSG00000024778"/>
<dbReference type="eggNOG" id="ENOG502S0SV">
    <property type="taxonomic scope" value="Eukaryota"/>
</dbReference>
<dbReference type="GeneTree" id="ENSGT00950000183126"/>
<dbReference type="HOGENOM" id="CLU_067123_1_0_1"/>
<dbReference type="InParanoid" id="P25446"/>
<dbReference type="OMA" id="RDTKCRC"/>
<dbReference type="OrthoDB" id="8848202at2759"/>
<dbReference type="PhylomeDB" id="P25446"/>
<dbReference type="TreeFam" id="TF333916"/>
<dbReference type="Reactome" id="R-MMU-3371378">
    <property type="pathway name" value="Regulation by c-FLIP"/>
</dbReference>
<dbReference type="Reactome" id="R-MMU-5218900">
    <property type="pathway name" value="CASP8 activity is inhibited"/>
</dbReference>
<dbReference type="Reactome" id="R-MMU-69416">
    <property type="pathway name" value="Dimerization of procaspase-8"/>
</dbReference>
<dbReference type="Reactome" id="R-MMU-75157">
    <property type="pathway name" value="FasL/ CD95L signaling"/>
</dbReference>
<dbReference type="BioGRID-ORCS" id="14102">
    <property type="hits" value="7 hits in 78 CRISPR screens"/>
</dbReference>
<dbReference type="ChiTaRS" id="Fas">
    <property type="organism name" value="mouse"/>
</dbReference>
<dbReference type="EvolutionaryTrace" id="P25446"/>
<dbReference type="PRO" id="PR:P25446"/>
<dbReference type="Proteomes" id="UP000000589">
    <property type="component" value="Chromosome 19"/>
</dbReference>
<dbReference type="RNAct" id="P25446">
    <property type="molecule type" value="protein"/>
</dbReference>
<dbReference type="Bgee" id="ENSMUSG00000024778">
    <property type="expression patterns" value="Expressed in granulocyte and 159 other cell types or tissues"/>
</dbReference>
<dbReference type="ExpressionAtlas" id="P25446">
    <property type="expression patterns" value="baseline and differential"/>
</dbReference>
<dbReference type="GO" id="GO:0031265">
    <property type="term" value="C:CD95 death-inducing signaling complex"/>
    <property type="evidence" value="ECO:0000314"/>
    <property type="project" value="UniProtKB"/>
</dbReference>
<dbReference type="GO" id="GO:0009986">
    <property type="term" value="C:cell surface"/>
    <property type="evidence" value="ECO:0000314"/>
    <property type="project" value="MGI"/>
</dbReference>
<dbReference type="GO" id="GO:0009897">
    <property type="term" value="C:external side of plasma membrane"/>
    <property type="evidence" value="ECO:0000314"/>
    <property type="project" value="MGI"/>
</dbReference>
<dbReference type="GO" id="GO:0005576">
    <property type="term" value="C:extracellular region"/>
    <property type="evidence" value="ECO:0000314"/>
    <property type="project" value="MGI"/>
</dbReference>
<dbReference type="GO" id="GO:0045121">
    <property type="term" value="C:membrane raft"/>
    <property type="evidence" value="ECO:0007669"/>
    <property type="project" value="UniProtKB-SubCell"/>
</dbReference>
<dbReference type="GO" id="GO:0005516">
    <property type="term" value="F:calmodulin binding"/>
    <property type="evidence" value="ECO:0000250"/>
    <property type="project" value="UniProtKB"/>
</dbReference>
<dbReference type="GO" id="GO:0042802">
    <property type="term" value="F:identical protein binding"/>
    <property type="evidence" value="ECO:0000314"/>
    <property type="project" value="MGI"/>
</dbReference>
<dbReference type="GO" id="GO:0004888">
    <property type="term" value="F:transmembrane signaling receptor activity"/>
    <property type="evidence" value="ECO:0007669"/>
    <property type="project" value="InterPro"/>
</dbReference>
<dbReference type="GO" id="GO:0006924">
    <property type="term" value="P:activation-induced cell death of T cells"/>
    <property type="evidence" value="ECO:0000314"/>
    <property type="project" value="MGI"/>
</dbReference>
<dbReference type="GO" id="GO:0006915">
    <property type="term" value="P:apoptotic process"/>
    <property type="evidence" value="ECO:0000315"/>
    <property type="project" value="MGI"/>
</dbReference>
<dbReference type="GO" id="GO:0097190">
    <property type="term" value="P:apoptotic signaling pathway"/>
    <property type="evidence" value="ECO:0000314"/>
    <property type="project" value="MGI"/>
</dbReference>
<dbReference type="GO" id="GO:0019724">
    <property type="term" value="P:B cell mediated immunity"/>
    <property type="evidence" value="ECO:0000315"/>
    <property type="project" value="MGI"/>
</dbReference>
<dbReference type="GO" id="GO:0071285">
    <property type="term" value="P:cellular response to lithium ion"/>
    <property type="evidence" value="ECO:0000315"/>
    <property type="project" value="MGI"/>
</dbReference>
<dbReference type="GO" id="GO:0007623">
    <property type="term" value="P:circadian rhythm"/>
    <property type="evidence" value="ECO:0000270"/>
    <property type="project" value="UniProtKB"/>
</dbReference>
<dbReference type="GO" id="GO:0097191">
    <property type="term" value="P:extrinsic apoptotic signaling pathway"/>
    <property type="evidence" value="ECO:0000314"/>
    <property type="project" value="MGI"/>
</dbReference>
<dbReference type="GO" id="GO:0097192">
    <property type="term" value="P:extrinsic apoptotic signaling pathway in absence of ligand"/>
    <property type="evidence" value="ECO:0000315"/>
    <property type="project" value="MGI"/>
</dbReference>
<dbReference type="GO" id="GO:0008625">
    <property type="term" value="P:extrinsic apoptotic signaling pathway via death domain receptors"/>
    <property type="evidence" value="ECO:0000314"/>
    <property type="project" value="BHF-UCL"/>
</dbReference>
<dbReference type="GO" id="GO:0010467">
    <property type="term" value="P:gene expression"/>
    <property type="evidence" value="ECO:0000315"/>
    <property type="project" value="MGI"/>
</dbReference>
<dbReference type="GO" id="GO:0097284">
    <property type="term" value="P:hepatocyte apoptotic process"/>
    <property type="evidence" value="ECO:0000316"/>
    <property type="project" value="MGI"/>
</dbReference>
<dbReference type="GO" id="GO:0006925">
    <property type="term" value="P:inflammatory cell apoptotic process"/>
    <property type="evidence" value="ECO:0000314"/>
    <property type="project" value="MGI"/>
</dbReference>
<dbReference type="GO" id="GO:0070227">
    <property type="term" value="P:lymphocyte apoptotic process"/>
    <property type="evidence" value="ECO:0000314"/>
    <property type="project" value="MGI"/>
</dbReference>
<dbReference type="GO" id="GO:0097049">
    <property type="term" value="P:motor neuron apoptotic process"/>
    <property type="evidence" value="ECO:0000315"/>
    <property type="project" value="MGI"/>
</dbReference>
<dbReference type="GO" id="GO:0097527">
    <property type="term" value="P:necroptotic signaling pathway"/>
    <property type="evidence" value="ECO:0000316"/>
    <property type="project" value="MGI"/>
</dbReference>
<dbReference type="GO" id="GO:0043066">
    <property type="term" value="P:negative regulation of apoptotic process"/>
    <property type="evidence" value="ECO:0000314"/>
    <property type="project" value="MGI"/>
</dbReference>
<dbReference type="GO" id="GO:0050869">
    <property type="term" value="P:negative regulation of B cell activation"/>
    <property type="evidence" value="ECO:0000315"/>
    <property type="project" value="MGI"/>
</dbReference>
<dbReference type="GO" id="GO:0045060">
    <property type="term" value="P:negative thymic T cell selection"/>
    <property type="evidence" value="ECO:0000315"/>
    <property type="project" value="MGI"/>
</dbReference>
<dbReference type="GO" id="GO:0051402">
    <property type="term" value="P:neuron apoptotic process"/>
    <property type="evidence" value="ECO:0000315"/>
    <property type="project" value="MGI"/>
</dbReference>
<dbReference type="GO" id="GO:0031334">
    <property type="term" value="P:positive regulation of protein-containing complex assembly"/>
    <property type="evidence" value="ECO:0000314"/>
    <property type="project" value="BHF-UCL"/>
</dbReference>
<dbReference type="GO" id="GO:0090200">
    <property type="term" value="P:positive regulation of release of cytochrome c from mitochondria"/>
    <property type="evidence" value="ECO:0000305"/>
    <property type="project" value="BHF-UCL"/>
</dbReference>
<dbReference type="GO" id="GO:0045577">
    <property type="term" value="P:regulation of B cell differentiation"/>
    <property type="evidence" value="ECO:0000315"/>
    <property type="project" value="MGI"/>
</dbReference>
<dbReference type="GO" id="GO:1901532">
    <property type="term" value="P:regulation of hematopoietic progenitor cell differentiation"/>
    <property type="evidence" value="ECO:0000315"/>
    <property type="project" value="MGI"/>
</dbReference>
<dbReference type="GO" id="GO:0045637">
    <property type="term" value="P:regulation of myeloid cell differentiation"/>
    <property type="evidence" value="ECO:0000315"/>
    <property type="project" value="MGI"/>
</dbReference>
<dbReference type="GO" id="GO:0045580">
    <property type="term" value="P:regulation of T cell differentiation"/>
    <property type="evidence" value="ECO:0000315"/>
    <property type="project" value="MGI"/>
</dbReference>
<dbReference type="GO" id="GO:0051384">
    <property type="term" value="P:response to glucocorticoid"/>
    <property type="evidence" value="ECO:0000315"/>
    <property type="project" value="MGI"/>
</dbReference>
<dbReference type="GO" id="GO:0009636">
    <property type="term" value="P:response to toxic substance"/>
    <property type="evidence" value="ECO:0000315"/>
    <property type="project" value="MGI"/>
</dbReference>
<dbReference type="GO" id="GO:0048536">
    <property type="term" value="P:spleen development"/>
    <property type="evidence" value="ECO:0000315"/>
    <property type="project" value="MGI"/>
</dbReference>
<dbReference type="GO" id="GO:0043029">
    <property type="term" value="P:T cell homeostasis"/>
    <property type="evidence" value="ECO:0000315"/>
    <property type="project" value="MGI"/>
</dbReference>
<dbReference type="CDD" id="cd08316">
    <property type="entry name" value="Death_FAS_TNFRSF6"/>
    <property type="match status" value="1"/>
</dbReference>
<dbReference type="CDD" id="cd10579">
    <property type="entry name" value="TNFRSF6"/>
    <property type="match status" value="1"/>
</dbReference>
<dbReference type="FunFam" id="2.10.50.10:FF:000021">
    <property type="entry name" value="Tumor necrosis factor receptor superfamily member 6"/>
    <property type="match status" value="1"/>
</dbReference>
<dbReference type="Gene3D" id="1.10.533.10">
    <property type="entry name" value="Death Domain, Fas"/>
    <property type="match status" value="1"/>
</dbReference>
<dbReference type="Gene3D" id="2.10.50.10">
    <property type="entry name" value="Tumor Necrosis Factor Receptor, subunit A, domain 2"/>
    <property type="match status" value="2"/>
</dbReference>
<dbReference type="InterPro" id="IPR011029">
    <property type="entry name" value="DEATH-like_dom_sf"/>
</dbReference>
<dbReference type="InterPro" id="IPR000488">
    <property type="entry name" value="Death_dom"/>
</dbReference>
<dbReference type="InterPro" id="IPR008063">
    <property type="entry name" value="Fas_rcpt"/>
</dbReference>
<dbReference type="InterPro" id="IPR001368">
    <property type="entry name" value="TNFR/NGFR_Cys_rich_reg"/>
</dbReference>
<dbReference type="InterPro" id="IPR033998">
    <property type="entry name" value="TNFRSF6_death"/>
</dbReference>
<dbReference type="InterPro" id="IPR033999">
    <property type="entry name" value="TNFRSF6_N"/>
</dbReference>
<dbReference type="PANTHER" id="PTHR46874">
    <property type="entry name" value="TUMOR NECROSIS FACTOR RECEPTOR SUPERFAMILY MEMBER 6"/>
    <property type="match status" value="1"/>
</dbReference>
<dbReference type="PANTHER" id="PTHR46874:SF1">
    <property type="entry name" value="TUMOR NECROSIS FACTOR RECEPTOR SUPERFAMILY MEMBER 6"/>
    <property type="match status" value="1"/>
</dbReference>
<dbReference type="Pfam" id="PF00531">
    <property type="entry name" value="Death"/>
    <property type="match status" value="1"/>
</dbReference>
<dbReference type="Pfam" id="PF00020">
    <property type="entry name" value="TNFR_c6"/>
    <property type="match status" value="2"/>
</dbReference>
<dbReference type="PRINTS" id="PR01680">
    <property type="entry name" value="TNFACTORR6"/>
</dbReference>
<dbReference type="SMART" id="SM00005">
    <property type="entry name" value="DEATH"/>
    <property type="match status" value="1"/>
</dbReference>
<dbReference type="SMART" id="SM00208">
    <property type="entry name" value="TNFR"/>
    <property type="match status" value="3"/>
</dbReference>
<dbReference type="SUPFAM" id="SSF47986">
    <property type="entry name" value="DEATH domain"/>
    <property type="match status" value="1"/>
</dbReference>
<dbReference type="SUPFAM" id="SSF57586">
    <property type="entry name" value="TNF receptor-like"/>
    <property type="match status" value="2"/>
</dbReference>
<dbReference type="PROSITE" id="PS50017">
    <property type="entry name" value="DEATH_DOMAIN"/>
    <property type="match status" value="1"/>
</dbReference>
<dbReference type="PROSITE" id="PS00652">
    <property type="entry name" value="TNFR_NGFR_1"/>
    <property type="match status" value="2"/>
</dbReference>
<dbReference type="PROSITE" id="PS50050">
    <property type="entry name" value="TNFR_NGFR_2"/>
    <property type="match status" value="2"/>
</dbReference>
<name>TNR6_MOUSE</name>
<gene>
    <name type="primary">Fas</name>
    <name type="synonym">Apt1</name>
    <name type="synonym">Tnfrsf6</name>
</gene>
<evidence type="ECO:0000250" key="1">
    <source>
        <dbReference type="UniProtKB" id="P25445"/>
    </source>
</evidence>
<evidence type="ECO:0000250" key="2">
    <source>
        <dbReference type="UniProtKB" id="P51867"/>
    </source>
</evidence>
<evidence type="ECO:0000255" key="3"/>
<evidence type="ECO:0000255" key="4">
    <source>
        <dbReference type="PROSITE-ProRule" id="PRU00064"/>
    </source>
</evidence>
<evidence type="ECO:0000255" key="5">
    <source>
        <dbReference type="PROSITE-ProRule" id="PRU00206"/>
    </source>
</evidence>
<evidence type="ECO:0000256" key="6">
    <source>
        <dbReference type="SAM" id="MobiDB-lite"/>
    </source>
</evidence>
<evidence type="ECO:0000269" key="7">
    <source>
    </source>
</evidence>
<evidence type="ECO:0000269" key="8">
    <source>
    </source>
</evidence>
<evidence type="ECO:0000269" key="9">
    <source>
    </source>
</evidence>
<evidence type="ECO:0000269" key="10">
    <source>
    </source>
</evidence>
<evidence type="ECO:0000269" key="11">
    <source>
    </source>
</evidence>
<evidence type="ECO:0000269" key="12">
    <source>
    </source>
</evidence>
<evidence type="ECO:0000305" key="13"/>
<evidence type="ECO:0007744" key="14">
    <source>
    </source>
</evidence>
<evidence type="ECO:0007744" key="15">
    <source>
    </source>
</evidence>
<evidence type="ECO:0007829" key="16">
    <source>
        <dbReference type="PDB" id="2NA6"/>
    </source>
</evidence>
<proteinExistence type="evidence at protein level"/>
<keyword id="KW-0002">3D-structure</keyword>
<keyword id="KW-0053">Apoptosis</keyword>
<keyword id="KW-0112">Calmodulin-binding</keyword>
<keyword id="KW-1003">Cell membrane</keyword>
<keyword id="KW-0225">Disease variant</keyword>
<keyword id="KW-1015">Disulfide bond</keyword>
<keyword id="KW-0325">Glycoprotein</keyword>
<keyword id="KW-0449">Lipoprotein</keyword>
<keyword id="KW-0472">Membrane</keyword>
<keyword id="KW-0564">Palmitate</keyword>
<keyword id="KW-0597">Phosphoprotein</keyword>
<keyword id="KW-0675">Receptor</keyword>
<keyword id="KW-1185">Reference proteome</keyword>
<keyword id="KW-0677">Repeat</keyword>
<keyword id="KW-0732">Signal</keyword>
<keyword id="KW-0812">Transmembrane</keyword>
<keyword id="KW-1133">Transmembrane helix</keyword>
<reference key="1">
    <citation type="journal article" date="1992" name="J. Immunol.">
        <title>The cDNA structure, expression, and chromosomal assignment of the mouse Fas antigen.</title>
        <authorList>
            <person name="Watanabe-Fukunaga R."/>
            <person name="Brannan C.I."/>
            <person name="Itoh N."/>
            <person name="Yonehara S."/>
            <person name="Copeland N.G."/>
            <person name="Jenkins N.A."/>
            <person name="Nagata S."/>
        </authorList>
    </citation>
    <scope>NUCLEOTIDE SEQUENCE [MRNA]</scope>
    <scope>TISSUE SPECIFICITY</scope>
</reference>
<reference key="2">
    <citation type="submission" date="2000-07" db="EMBL/GenBank/DDBJ databases">
        <title>Role of a mutant fas receptor in a transgenic mouse.</title>
        <authorList>
            <person name="Koczan D."/>
            <person name="Ibrahim S.M."/>
            <person name="Thiesen H.J."/>
        </authorList>
    </citation>
    <scope>NUCLEOTIDE SEQUENCE [GENOMIC DNA]</scope>
    <source>
        <strain>129/Sv</strain>
    </source>
</reference>
<reference key="3">
    <citation type="journal article" date="2005" name="Science">
        <title>The transcriptional landscape of the mammalian genome.</title>
        <authorList>
            <person name="Carninci P."/>
            <person name="Kasukawa T."/>
            <person name="Katayama S."/>
            <person name="Gough J."/>
            <person name="Frith M.C."/>
            <person name="Maeda N."/>
            <person name="Oyama R."/>
            <person name="Ravasi T."/>
            <person name="Lenhard B."/>
            <person name="Wells C."/>
            <person name="Kodzius R."/>
            <person name="Shimokawa K."/>
            <person name="Bajic V.B."/>
            <person name="Brenner S.E."/>
            <person name="Batalov S."/>
            <person name="Forrest A.R."/>
            <person name="Zavolan M."/>
            <person name="Davis M.J."/>
            <person name="Wilming L.G."/>
            <person name="Aidinis V."/>
            <person name="Allen J.E."/>
            <person name="Ambesi-Impiombato A."/>
            <person name="Apweiler R."/>
            <person name="Aturaliya R.N."/>
            <person name="Bailey T.L."/>
            <person name="Bansal M."/>
            <person name="Baxter L."/>
            <person name="Beisel K.W."/>
            <person name="Bersano T."/>
            <person name="Bono H."/>
            <person name="Chalk A.M."/>
            <person name="Chiu K.P."/>
            <person name="Choudhary V."/>
            <person name="Christoffels A."/>
            <person name="Clutterbuck D.R."/>
            <person name="Crowe M.L."/>
            <person name="Dalla E."/>
            <person name="Dalrymple B.P."/>
            <person name="de Bono B."/>
            <person name="Della Gatta G."/>
            <person name="di Bernardo D."/>
            <person name="Down T."/>
            <person name="Engstrom P."/>
            <person name="Fagiolini M."/>
            <person name="Faulkner G."/>
            <person name="Fletcher C.F."/>
            <person name="Fukushima T."/>
            <person name="Furuno M."/>
            <person name="Futaki S."/>
            <person name="Gariboldi M."/>
            <person name="Georgii-Hemming P."/>
            <person name="Gingeras T.R."/>
            <person name="Gojobori T."/>
            <person name="Green R.E."/>
            <person name="Gustincich S."/>
            <person name="Harbers M."/>
            <person name="Hayashi Y."/>
            <person name="Hensch T.K."/>
            <person name="Hirokawa N."/>
            <person name="Hill D."/>
            <person name="Huminiecki L."/>
            <person name="Iacono M."/>
            <person name="Ikeo K."/>
            <person name="Iwama A."/>
            <person name="Ishikawa T."/>
            <person name="Jakt M."/>
            <person name="Kanapin A."/>
            <person name="Katoh M."/>
            <person name="Kawasawa Y."/>
            <person name="Kelso J."/>
            <person name="Kitamura H."/>
            <person name="Kitano H."/>
            <person name="Kollias G."/>
            <person name="Krishnan S.P."/>
            <person name="Kruger A."/>
            <person name="Kummerfeld S.K."/>
            <person name="Kurochkin I.V."/>
            <person name="Lareau L.F."/>
            <person name="Lazarevic D."/>
            <person name="Lipovich L."/>
            <person name="Liu J."/>
            <person name="Liuni S."/>
            <person name="McWilliam S."/>
            <person name="Madan Babu M."/>
            <person name="Madera M."/>
            <person name="Marchionni L."/>
            <person name="Matsuda H."/>
            <person name="Matsuzawa S."/>
            <person name="Miki H."/>
            <person name="Mignone F."/>
            <person name="Miyake S."/>
            <person name="Morris K."/>
            <person name="Mottagui-Tabar S."/>
            <person name="Mulder N."/>
            <person name="Nakano N."/>
            <person name="Nakauchi H."/>
            <person name="Ng P."/>
            <person name="Nilsson R."/>
            <person name="Nishiguchi S."/>
            <person name="Nishikawa S."/>
            <person name="Nori F."/>
            <person name="Ohara O."/>
            <person name="Okazaki Y."/>
            <person name="Orlando V."/>
            <person name="Pang K.C."/>
            <person name="Pavan W.J."/>
            <person name="Pavesi G."/>
            <person name="Pesole G."/>
            <person name="Petrovsky N."/>
            <person name="Piazza S."/>
            <person name="Reed J."/>
            <person name="Reid J.F."/>
            <person name="Ring B.Z."/>
            <person name="Ringwald M."/>
            <person name="Rost B."/>
            <person name="Ruan Y."/>
            <person name="Salzberg S.L."/>
            <person name="Sandelin A."/>
            <person name="Schneider C."/>
            <person name="Schoenbach C."/>
            <person name="Sekiguchi K."/>
            <person name="Semple C.A."/>
            <person name="Seno S."/>
            <person name="Sessa L."/>
            <person name="Sheng Y."/>
            <person name="Shibata Y."/>
            <person name="Shimada H."/>
            <person name="Shimada K."/>
            <person name="Silva D."/>
            <person name="Sinclair B."/>
            <person name="Sperling S."/>
            <person name="Stupka E."/>
            <person name="Sugiura K."/>
            <person name="Sultana R."/>
            <person name="Takenaka Y."/>
            <person name="Taki K."/>
            <person name="Tammoja K."/>
            <person name="Tan S.L."/>
            <person name="Tang S."/>
            <person name="Taylor M.S."/>
            <person name="Tegner J."/>
            <person name="Teichmann S.A."/>
            <person name="Ueda H.R."/>
            <person name="van Nimwegen E."/>
            <person name="Verardo R."/>
            <person name="Wei C.L."/>
            <person name="Yagi K."/>
            <person name="Yamanishi H."/>
            <person name="Zabarovsky E."/>
            <person name="Zhu S."/>
            <person name="Zimmer A."/>
            <person name="Hide W."/>
            <person name="Bult C."/>
            <person name="Grimmond S.M."/>
            <person name="Teasdale R.D."/>
            <person name="Liu E.T."/>
            <person name="Brusic V."/>
            <person name="Quackenbush J."/>
            <person name="Wahlestedt C."/>
            <person name="Mattick J.S."/>
            <person name="Hume D.A."/>
            <person name="Kai C."/>
            <person name="Sasaki D."/>
            <person name="Tomaru Y."/>
            <person name="Fukuda S."/>
            <person name="Kanamori-Katayama M."/>
            <person name="Suzuki M."/>
            <person name="Aoki J."/>
            <person name="Arakawa T."/>
            <person name="Iida J."/>
            <person name="Imamura K."/>
            <person name="Itoh M."/>
            <person name="Kato T."/>
            <person name="Kawaji H."/>
            <person name="Kawagashira N."/>
            <person name="Kawashima T."/>
            <person name="Kojima M."/>
            <person name="Kondo S."/>
            <person name="Konno H."/>
            <person name="Nakano K."/>
            <person name="Ninomiya N."/>
            <person name="Nishio T."/>
            <person name="Okada M."/>
            <person name="Plessy C."/>
            <person name="Shibata K."/>
            <person name="Shiraki T."/>
            <person name="Suzuki S."/>
            <person name="Tagami M."/>
            <person name="Waki K."/>
            <person name="Watahiki A."/>
            <person name="Okamura-Oho Y."/>
            <person name="Suzuki H."/>
            <person name="Kawai J."/>
            <person name="Hayashizaki Y."/>
        </authorList>
    </citation>
    <scope>NUCLEOTIDE SEQUENCE [LARGE SCALE MRNA]</scope>
    <source>
        <strain>C57BL/6J</strain>
        <tissue>Kidney</tissue>
    </source>
</reference>
<reference key="4">
    <citation type="journal article" date="2007" name="Cancer Res.">
        <title>A role for the Fas/FasL system in modulating genetic susceptibility to T-cell lymphoblastic lymphomas.</title>
        <authorList>
            <person name="Villa-Morales M."/>
            <person name="Santos J."/>
            <person name="Perez-Gomez E."/>
            <person name="Quintanilla M."/>
            <person name="Fernandez-Piqueras J."/>
        </authorList>
    </citation>
    <scope>NUCLEOTIDE SEQUENCE [MRNA]</scope>
    <source>
        <strain>C57BL/6J</strain>
    </source>
</reference>
<reference key="5">
    <citation type="submission" date="2005-07" db="EMBL/GenBank/DDBJ databases">
        <authorList>
            <person name="Mural R.J."/>
            <person name="Adams M.D."/>
            <person name="Myers E.W."/>
            <person name="Smith H.O."/>
            <person name="Venter J.C."/>
        </authorList>
    </citation>
    <scope>NUCLEOTIDE SEQUENCE [LARGE SCALE GENOMIC DNA]</scope>
</reference>
<reference key="6">
    <citation type="journal article" date="2004" name="Genome Res.">
        <title>The status, quality, and expansion of the NIH full-length cDNA project: the Mammalian Gene Collection (MGC).</title>
        <authorList>
            <consortium name="The MGC Project Team"/>
        </authorList>
    </citation>
    <scope>NUCLEOTIDE SEQUENCE [LARGE SCALE MRNA]</scope>
    <source>
        <tissue>Kidney</tissue>
    </source>
</reference>
<reference key="7">
    <citation type="journal article" date="1993" name="Proc. Natl. Acad. Sci. U.S.A.">
        <title>Aberrant transcription caused by the insertion of an early transposable element in an intron of the Fas antigen gene of lpr mice.</title>
        <authorList>
            <person name="Adachi M."/>
            <person name="Watanabe-Fukunaga R."/>
            <person name="Nagata S."/>
        </authorList>
    </citation>
    <scope>NUCLEOTIDE SEQUENCE [GENOMIC DNA] OF 1-96</scope>
</reference>
<reference key="8">
    <citation type="journal article" date="1997" name="Cell">
        <title>Daxx, a novel Fas-binding protein that activates JNK and apoptosis.</title>
        <authorList>
            <person name="Yang X."/>
            <person name="Khosravi-Far R."/>
            <person name="Chang H.Y."/>
            <person name="Baltimore D."/>
        </authorList>
    </citation>
    <scope>INTERACTION WITH DAXX</scope>
</reference>
<reference key="9">
    <citation type="journal article" date="2000" name="J. Exp. Med.">
        <title>FIST/HIPK3: a Fas/FADD-interacting serine/threonine kinase that induces FADD phosphorylation and inhibits Fas-mediated Jun NH2-terminal kinase activation.</title>
        <authorList>
            <person name="Rochat-Steiner V."/>
            <person name="Becker K."/>
            <person name="Micheau O."/>
            <person name="Schneider P."/>
            <person name="Burns K."/>
            <person name="Tschopp J."/>
        </authorList>
    </citation>
    <scope>INTERACTION WITH HIPK3</scope>
</reference>
<reference key="10">
    <citation type="journal article" date="2004" name="Mol. Cell">
        <title>Inhibition of both the extrinsic and intrinsic death pathways through nonhomotypic death-fold interactions.</title>
        <authorList>
            <person name="Nam Y.J."/>
            <person name="Mani K."/>
            <person name="Ashton A.W."/>
            <person name="Peng C.F."/>
            <person name="Krishnamurthy B."/>
            <person name="Hayakawa Y."/>
            <person name="Lee P."/>
            <person name="Korsmeyer S.J."/>
            <person name="Kitsis R.N."/>
        </authorList>
    </citation>
    <scope>INTERACTION WITH NOL3</scope>
</reference>
<reference key="11">
    <citation type="journal article" date="2007" name="Proc. Natl. Acad. Sci. U.S.A.">
        <title>Large-scale phosphorylation analysis of mouse liver.</title>
        <authorList>
            <person name="Villen J."/>
            <person name="Beausoleil S.A."/>
            <person name="Gerber S.A."/>
            <person name="Gygi S.P."/>
        </authorList>
    </citation>
    <scope>IDENTIFICATION BY MASS SPECTROMETRY [LARGE SCALE ANALYSIS]</scope>
    <source>
        <tissue>Liver</tissue>
    </source>
</reference>
<reference key="12">
    <citation type="journal article" date="2009" name="Immunity">
        <title>The phagosomal proteome in interferon-gamma-activated macrophages.</title>
        <authorList>
            <person name="Trost M."/>
            <person name="English L."/>
            <person name="Lemieux S."/>
            <person name="Courcelles M."/>
            <person name="Desjardins M."/>
            <person name="Thibault P."/>
        </authorList>
    </citation>
    <scope>PHOSPHORYLATION [LARGE SCALE ANALYSIS] AT SER-220 AND THR-314</scope>
    <scope>IDENTIFICATION BY MASS SPECTROMETRY [LARGE SCALE ANALYSIS]</scope>
</reference>
<reference key="13">
    <citation type="journal article" date="2010" name="Cell">
        <title>A tissue-specific atlas of mouse protein phosphorylation and expression.</title>
        <authorList>
            <person name="Huttlin E.L."/>
            <person name="Jedrychowski M.P."/>
            <person name="Elias J.E."/>
            <person name="Goswami T."/>
            <person name="Rad R."/>
            <person name="Beausoleil S.A."/>
            <person name="Villen J."/>
            <person name="Haas W."/>
            <person name="Sowa M.E."/>
            <person name="Gygi S.P."/>
        </authorList>
    </citation>
    <scope>PHOSPHORYLATION [LARGE SCALE ANALYSIS] AT THR-206; SER-217; SER-220 AND THR-314</scope>
    <scope>IDENTIFICATION BY MASS SPECTROMETRY [LARGE SCALE ANALYSIS]</scope>
    <source>
        <tissue>Kidney</tissue>
        <tissue>Liver</tissue>
        <tissue>Lung</tissue>
        <tissue>Pancreas</tissue>
        <tissue>Testis</tissue>
    </source>
</reference>
<reference key="14">
    <citation type="journal article" date="2013" name="J. Neurosci.">
        <title>p75 neurotrophin receptor is a clock gene that regulates oscillatory components of circadian and metabolic networks.</title>
        <authorList>
            <person name="Baeza-Raja B."/>
            <person name="Eckel-Mahan K."/>
            <person name="Zhang L."/>
            <person name="Vagena E."/>
            <person name="Tsigelny I.F."/>
            <person name="Sassone-Corsi P."/>
            <person name="Ptacek L.J."/>
            <person name="Akassoglou K."/>
        </authorList>
    </citation>
    <scope>INDUCTION</scope>
</reference>
<reference key="15">
    <citation type="journal article" date="1992" name="Nature">
        <title>Lymphoproliferation disorder in mice explained by defects in Fas antigen that mediates apoptosis.</title>
        <authorList>
            <person name="Watanabe-Fukunaga R."/>
            <person name="Brannan C.I."/>
            <person name="Copeland N.G."/>
            <person name="Jenkins N.A."/>
            <person name="Nagata S."/>
        </authorList>
    </citation>
    <scope>VARIANT LPR ASN-246</scope>
</reference>
<sequence length="327" mass="37437">MLWIWAVLPLVLAGSQLRVHTQGTNSISESLKLRRRVRETDKNCSEGLYQGGPFCCQPCQPGKKKVEDCKMNGGTPTCAPCTEGKEYMDKNHYADKCRRCTLCDEEHGLEVETNCTLTQNTKCKCKPDFYCDSPGCEHCVRCASCEHGTLEPCTATSNTNCRKQSPRNRLWLLTILVLLIPLVFIYRKYRKRKCWKRRQDDPESRTSSRETIPMNASNLSLSKYIPRIAEDMTIQEAKKFARENNIKEGKIDEIMHDSIQDTAEQKVQLLLCWYQSHGKSDAYQDLIKGLKKAECRRTLDKFQDMVQKDLGKSTPDTGNENEGQCLE</sequence>